<accession>P36212</accession>
<accession>Q9LK92</accession>
<protein>
    <recommendedName>
        <fullName evidence="2">Large ribosomal subunit protein bL12cx</fullName>
    </recommendedName>
    <alternativeName>
        <fullName>50S ribosomal protein L12-3, chloroplastic</fullName>
    </alternativeName>
    <alternativeName>
        <fullName>CL12-C</fullName>
    </alternativeName>
</protein>
<keyword id="KW-0150">Chloroplast</keyword>
<keyword id="KW-0934">Plastid</keyword>
<keyword id="KW-1185">Reference proteome</keyword>
<keyword id="KW-0687">Ribonucleoprotein</keyword>
<keyword id="KW-0689">Ribosomal protein</keyword>
<keyword id="KW-0809">Transit peptide</keyword>
<gene>
    <name type="primary">RPL12C</name>
    <name type="ordered locus">At3g27850</name>
    <name type="ORF">K16N12.7</name>
    <name type="ORF">K16N2.21</name>
</gene>
<comment type="subcellular location">
    <subcellularLocation>
        <location>Plastid</location>
        <location>Chloroplast</location>
    </subcellularLocation>
</comment>
<comment type="similarity">
    <text evidence="3">Belongs to the bacterial ribosomal protein bL12 family.</text>
</comment>
<proteinExistence type="evidence at transcript level"/>
<name>RK123_ARATH</name>
<feature type="transit peptide" description="Chloroplast" evidence="1">
    <location>
        <begin position="1"/>
        <end position="54"/>
    </location>
</feature>
<feature type="chain" id="PRO_0000030450" description="Large ribosomal subunit protein bL12cx">
    <location>
        <begin position="55"/>
        <end position="187"/>
    </location>
</feature>
<feature type="sequence conflict" description="In Ref. 1; CAA48183." evidence="3" ref="1">
    <original>S</original>
    <variation>C</variation>
    <location>
        <position position="20"/>
    </location>
</feature>
<sequence length="187" mass="19682">MASTTLSIATTIRSSSPLTSASTHHFLSKPTAIEFPFRLSSSSSHRAINLRPISAVEAPEKIEKIGSEISSLTLEEARILVDYLQDKFGVSPLSLAPAAAAVAAPADGGAAAVVEEQTEFDVVINEVPSSSRIAVIKAVRALTSLALKEAKELIEGLPKKFKEGITKDEAEEAKKTLEEAGAKVSIA</sequence>
<organism>
    <name type="scientific">Arabidopsis thaliana</name>
    <name type="common">Mouse-ear cress</name>
    <dbReference type="NCBI Taxonomy" id="3702"/>
    <lineage>
        <taxon>Eukaryota</taxon>
        <taxon>Viridiplantae</taxon>
        <taxon>Streptophyta</taxon>
        <taxon>Embryophyta</taxon>
        <taxon>Tracheophyta</taxon>
        <taxon>Spermatophyta</taxon>
        <taxon>Magnoliopsida</taxon>
        <taxon>eudicotyledons</taxon>
        <taxon>Gunneridae</taxon>
        <taxon>Pentapetalae</taxon>
        <taxon>rosids</taxon>
        <taxon>malvids</taxon>
        <taxon>Brassicales</taxon>
        <taxon>Brassicaceae</taxon>
        <taxon>Camelineae</taxon>
        <taxon>Arabidopsis</taxon>
    </lineage>
</organism>
<evidence type="ECO:0000255" key="1"/>
<evidence type="ECO:0000303" key="2">
    <source>
    </source>
</evidence>
<evidence type="ECO:0000305" key="3"/>
<dbReference type="EMBL" id="X68046">
    <property type="protein sequence ID" value="CAA48183.1"/>
    <property type="molecule type" value="Genomic_DNA"/>
</dbReference>
<dbReference type="EMBL" id="AP000371">
    <property type="protein sequence ID" value="BAB02531.1"/>
    <property type="molecule type" value="Genomic_DNA"/>
</dbReference>
<dbReference type="EMBL" id="CP002686">
    <property type="protein sequence ID" value="AEE77372.1"/>
    <property type="molecule type" value="Genomic_DNA"/>
</dbReference>
<dbReference type="EMBL" id="AY037241">
    <property type="protein sequence ID" value="AAK59841.1"/>
    <property type="molecule type" value="mRNA"/>
</dbReference>
<dbReference type="EMBL" id="AY136300">
    <property type="protein sequence ID" value="AAM96966.1"/>
    <property type="molecule type" value="mRNA"/>
</dbReference>
<dbReference type="EMBL" id="AY143956">
    <property type="protein sequence ID" value="AAN28895.1"/>
    <property type="molecule type" value="mRNA"/>
</dbReference>
<dbReference type="PIR" id="C53394">
    <property type="entry name" value="C53394"/>
</dbReference>
<dbReference type="SMR" id="P36212"/>
<dbReference type="BioGRID" id="7735">
    <property type="interactions" value="2"/>
</dbReference>
<dbReference type="FunCoup" id="P36212">
    <property type="interactions" value="679"/>
</dbReference>
<dbReference type="STRING" id="3702.P36212"/>
<dbReference type="iPTMnet" id="P36212"/>
<dbReference type="PaxDb" id="3702-AT3G27850.1"/>
<dbReference type="ProteomicsDB" id="237026"/>
<dbReference type="EnsemblPlants" id="AT3G27850.1">
    <property type="protein sequence ID" value="AT3G27850.1"/>
    <property type="gene ID" value="AT3G27850"/>
</dbReference>
<dbReference type="Gramene" id="AT3G27850.1">
    <property type="protein sequence ID" value="AT3G27850.1"/>
    <property type="gene ID" value="AT3G27850"/>
</dbReference>
<dbReference type="KEGG" id="ath:AT3G27850"/>
<dbReference type="Araport" id="AT3G27850"/>
<dbReference type="TAIR" id="AT3G27850">
    <property type="gene designation" value="RPL12-C"/>
</dbReference>
<dbReference type="eggNOG" id="KOG1715">
    <property type="taxonomic scope" value="Eukaryota"/>
</dbReference>
<dbReference type="HOGENOM" id="CLU_086499_1_2_1"/>
<dbReference type="InParanoid" id="P36212"/>
<dbReference type="OrthoDB" id="250175at2759"/>
<dbReference type="PhylomeDB" id="P36212"/>
<dbReference type="PRO" id="PR:P36212"/>
<dbReference type="Proteomes" id="UP000006548">
    <property type="component" value="Chromosome 3"/>
</dbReference>
<dbReference type="ExpressionAtlas" id="P36212">
    <property type="expression patterns" value="baseline and differential"/>
</dbReference>
<dbReference type="GO" id="GO:0009570">
    <property type="term" value="C:chloroplast stroma"/>
    <property type="evidence" value="ECO:0007005"/>
    <property type="project" value="TAIR"/>
</dbReference>
<dbReference type="GO" id="GO:0009535">
    <property type="term" value="C:chloroplast thylakoid membrane"/>
    <property type="evidence" value="ECO:0007005"/>
    <property type="project" value="TAIR"/>
</dbReference>
<dbReference type="GO" id="GO:0005829">
    <property type="term" value="C:cytosol"/>
    <property type="evidence" value="ECO:0007005"/>
    <property type="project" value="TAIR"/>
</dbReference>
<dbReference type="GO" id="GO:0000311">
    <property type="term" value="C:plastid large ribosomal subunit"/>
    <property type="evidence" value="ECO:0000250"/>
    <property type="project" value="TAIR"/>
</dbReference>
<dbReference type="GO" id="GO:0009579">
    <property type="term" value="C:thylakoid"/>
    <property type="evidence" value="ECO:0007005"/>
    <property type="project" value="TAIR"/>
</dbReference>
<dbReference type="GO" id="GO:0003729">
    <property type="term" value="F:mRNA binding"/>
    <property type="evidence" value="ECO:0000314"/>
    <property type="project" value="TAIR"/>
</dbReference>
<dbReference type="GO" id="GO:0003735">
    <property type="term" value="F:structural constituent of ribosome"/>
    <property type="evidence" value="ECO:0007669"/>
    <property type="project" value="InterPro"/>
</dbReference>
<dbReference type="GO" id="GO:0006412">
    <property type="term" value="P:translation"/>
    <property type="evidence" value="ECO:0000304"/>
    <property type="project" value="TAIR"/>
</dbReference>
<dbReference type="CDD" id="cd00387">
    <property type="entry name" value="Ribosomal_L7_L12"/>
    <property type="match status" value="1"/>
</dbReference>
<dbReference type="FunFam" id="3.30.1390.10:FF:000001">
    <property type="entry name" value="50S ribosomal protein L7/L12"/>
    <property type="match status" value="1"/>
</dbReference>
<dbReference type="FunFam" id="1.20.5.710:FF:000009">
    <property type="entry name" value="Ribosomal protein L12-B"/>
    <property type="match status" value="1"/>
</dbReference>
<dbReference type="Gene3D" id="3.30.1390.10">
    <property type="match status" value="1"/>
</dbReference>
<dbReference type="Gene3D" id="1.20.5.710">
    <property type="entry name" value="Single helix bin"/>
    <property type="match status" value="1"/>
</dbReference>
<dbReference type="HAMAP" id="MF_00368">
    <property type="entry name" value="Ribosomal_bL12"/>
    <property type="match status" value="1"/>
</dbReference>
<dbReference type="InterPro" id="IPR000206">
    <property type="entry name" value="Ribosomal_bL12"/>
</dbReference>
<dbReference type="InterPro" id="IPR013823">
    <property type="entry name" value="Ribosomal_bL12_C"/>
</dbReference>
<dbReference type="InterPro" id="IPR014719">
    <property type="entry name" value="Ribosomal_bL12_C/ClpS-like"/>
</dbReference>
<dbReference type="InterPro" id="IPR008932">
    <property type="entry name" value="Ribosomal_bL12_oligo"/>
</dbReference>
<dbReference type="InterPro" id="IPR036235">
    <property type="entry name" value="Ribosomal_bL12_oligo_N_sf"/>
</dbReference>
<dbReference type="NCBIfam" id="TIGR00855">
    <property type="entry name" value="L12"/>
    <property type="match status" value="1"/>
</dbReference>
<dbReference type="PANTHER" id="PTHR45987">
    <property type="entry name" value="39S RIBOSOMAL PROTEIN L12"/>
    <property type="match status" value="1"/>
</dbReference>
<dbReference type="PANTHER" id="PTHR45987:SF26">
    <property type="entry name" value="LARGE RIBOSOMAL SUBUNIT PROTEIN BL12CX-RELATED"/>
    <property type="match status" value="1"/>
</dbReference>
<dbReference type="Pfam" id="PF00542">
    <property type="entry name" value="Ribosomal_L12"/>
    <property type="match status" value="1"/>
</dbReference>
<dbReference type="Pfam" id="PF16320">
    <property type="entry name" value="Ribosomal_L12_N"/>
    <property type="match status" value="1"/>
</dbReference>
<dbReference type="SUPFAM" id="SSF54736">
    <property type="entry name" value="ClpS-like"/>
    <property type="match status" value="1"/>
</dbReference>
<dbReference type="SUPFAM" id="SSF48300">
    <property type="entry name" value="Ribosomal protein L7/12, oligomerisation (N-terminal) domain"/>
    <property type="match status" value="1"/>
</dbReference>
<reference key="1">
    <citation type="journal article" date="1994" name="J. Biol. Chem.">
        <title>Multicopy GTPase center protein L12 of Arabidopsis chloroplast ribosome is encoded by a clustered nuclear gene family with the expressed members closely linked to tRNA(Pro) genes.</title>
        <authorList>
            <person name="Wegloehner W."/>
            <person name="Subramanian A.R."/>
        </authorList>
    </citation>
    <scope>NUCLEOTIDE SEQUENCE [GENOMIC DNA]</scope>
    <source>
        <strain>cv. Landsberg erecta</strain>
    </source>
</reference>
<reference key="2">
    <citation type="journal article" date="2000" name="DNA Res.">
        <title>Structural analysis of Arabidopsis thaliana chromosome 3. II. Sequence features of the 4,251,695 bp regions covered by 90 P1, TAC and BAC clones.</title>
        <authorList>
            <person name="Kaneko T."/>
            <person name="Katoh T."/>
            <person name="Sato S."/>
            <person name="Nakamura Y."/>
            <person name="Asamizu E."/>
            <person name="Tabata S."/>
        </authorList>
    </citation>
    <scope>NUCLEOTIDE SEQUENCE [LARGE SCALE GENOMIC DNA]</scope>
    <source>
        <strain>cv. Columbia</strain>
    </source>
</reference>
<reference key="3">
    <citation type="journal article" date="2017" name="Plant J.">
        <title>Araport11: a complete reannotation of the Arabidopsis thaliana reference genome.</title>
        <authorList>
            <person name="Cheng C.Y."/>
            <person name="Krishnakumar V."/>
            <person name="Chan A.P."/>
            <person name="Thibaud-Nissen F."/>
            <person name="Schobel S."/>
            <person name="Town C.D."/>
        </authorList>
    </citation>
    <scope>GENOME REANNOTATION</scope>
    <source>
        <strain>cv. Columbia</strain>
    </source>
</reference>
<reference key="4">
    <citation type="journal article" date="2003" name="Science">
        <title>Empirical analysis of transcriptional activity in the Arabidopsis genome.</title>
        <authorList>
            <person name="Yamada K."/>
            <person name="Lim J."/>
            <person name="Dale J.M."/>
            <person name="Chen H."/>
            <person name="Shinn P."/>
            <person name="Palm C.J."/>
            <person name="Southwick A.M."/>
            <person name="Wu H.C."/>
            <person name="Kim C.J."/>
            <person name="Nguyen M."/>
            <person name="Pham P.K."/>
            <person name="Cheuk R.F."/>
            <person name="Karlin-Newmann G."/>
            <person name="Liu S.X."/>
            <person name="Lam B."/>
            <person name="Sakano H."/>
            <person name="Wu T."/>
            <person name="Yu G."/>
            <person name="Miranda M."/>
            <person name="Quach H.L."/>
            <person name="Tripp M."/>
            <person name="Chang C.H."/>
            <person name="Lee J.M."/>
            <person name="Toriumi M.J."/>
            <person name="Chan M.M."/>
            <person name="Tang C.C."/>
            <person name="Onodera C.S."/>
            <person name="Deng J.M."/>
            <person name="Akiyama K."/>
            <person name="Ansari Y."/>
            <person name="Arakawa T."/>
            <person name="Banh J."/>
            <person name="Banno F."/>
            <person name="Bowser L."/>
            <person name="Brooks S.Y."/>
            <person name="Carninci P."/>
            <person name="Chao Q."/>
            <person name="Choy N."/>
            <person name="Enju A."/>
            <person name="Goldsmith A.D."/>
            <person name="Gurjal M."/>
            <person name="Hansen N.F."/>
            <person name="Hayashizaki Y."/>
            <person name="Johnson-Hopson C."/>
            <person name="Hsuan V.W."/>
            <person name="Iida K."/>
            <person name="Karnes M."/>
            <person name="Khan S."/>
            <person name="Koesema E."/>
            <person name="Ishida J."/>
            <person name="Jiang P.X."/>
            <person name="Jones T."/>
            <person name="Kawai J."/>
            <person name="Kamiya A."/>
            <person name="Meyers C."/>
            <person name="Nakajima M."/>
            <person name="Narusaka M."/>
            <person name="Seki M."/>
            <person name="Sakurai T."/>
            <person name="Satou M."/>
            <person name="Tamse R."/>
            <person name="Vaysberg M."/>
            <person name="Wallender E.K."/>
            <person name="Wong C."/>
            <person name="Yamamura Y."/>
            <person name="Yuan S."/>
            <person name="Shinozaki K."/>
            <person name="Davis R.W."/>
            <person name="Theologis A."/>
            <person name="Ecker J.R."/>
        </authorList>
    </citation>
    <scope>NUCLEOTIDE SEQUENCE [LARGE SCALE MRNA]</scope>
    <source>
        <strain>cv. Columbia</strain>
    </source>
</reference>
<reference key="5">
    <citation type="journal article" date="2023" name="Plant Cell">
        <title>An updated nomenclature for plant ribosomal protein genes.</title>
        <authorList>
            <person name="Scarpin M.R."/>
            <person name="Busche M."/>
            <person name="Martinez R.E."/>
            <person name="Harper L.C."/>
            <person name="Reiser L."/>
            <person name="Szakonyi D."/>
            <person name="Merchante C."/>
            <person name="Lan T."/>
            <person name="Xiong W."/>
            <person name="Mo B."/>
            <person name="Tang G."/>
            <person name="Chen X."/>
            <person name="Bailey-Serres J."/>
            <person name="Browning K.S."/>
            <person name="Brunkard J.O."/>
        </authorList>
    </citation>
    <scope>NOMENCLATURE</scope>
</reference>